<sequence>MPQLTKSAELFELAKKFIPGGVNSPVRAFKSVGGTPIYMAKGEGAYMTDVDGNTYLDYVGSWGPFILGSMQPRVTAAIEYTLRNIGSSFGTPIEMEIEIAELLSRIVPSIEMVRMVNSGTEATMSAVRLARGYTGRDKIIKFEGCYHGHGDSFLIKAGSGVLTLGSPDSPGVTKGTAADTLNATYNDIESVRLLVNENRGDIAAIIIEPVAGNTGVIPAKKEFLVALRELCDQEGIVLIFDEVMCGFRVALGGAQELYGVTPDLTTMGKIIGGGLPVGAFGGKRKIMENVAPLGSVYQAGTLSGNPLALTAGLETLKILMEEDPYPELERKAAFLEAGFRENMQKLGLNYVQNRVGSMACLFFTETPVVDYKSAITADVAKYGKYFHSMLDQGIYLAPSQFEAMFTSYVHSDEDLEKTVKANYNALVAAHQ</sequence>
<proteinExistence type="inferred from homology"/>
<evidence type="ECO:0000255" key="1">
    <source>
        <dbReference type="HAMAP-Rule" id="MF_00375"/>
    </source>
</evidence>
<comment type="catalytic activity">
    <reaction evidence="1">
        <text>(S)-4-amino-5-oxopentanoate = 5-aminolevulinate</text>
        <dbReference type="Rhea" id="RHEA:14265"/>
        <dbReference type="ChEBI" id="CHEBI:57501"/>
        <dbReference type="ChEBI" id="CHEBI:356416"/>
        <dbReference type="EC" id="5.4.3.8"/>
    </reaction>
</comment>
<comment type="cofactor">
    <cofactor evidence="1">
        <name>pyridoxal 5'-phosphate</name>
        <dbReference type="ChEBI" id="CHEBI:597326"/>
    </cofactor>
</comment>
<comment type="pathway">
    <text evidence="1">Porphyrin-containing compound metabolism; protoporphyrin-IX biosynthesis; 5-aminolevulinate from L-glutamyl-tRNA(Glu): step 2/2.</text>
</comment>
<comment type="pathway">
    <text evidence="1">Porphyrin-containing compound metabolism; chlorophyll biosynthesis.</text>
</comment>
<comment type="subunit">
    <text evidence="1">Homodimer.</text>
</comment>
<comment type="subcellular location">
    <subcellularLocation>
        <location evidence="1">Cytoplasm</location>
    </subcellularLocation>
</comment>
<comment type="similarity">
    <text evidence="1">Belongs to the class-III pyridoxal-phosphate-dependent aminotransferase family. HemL subfamily.</text>
</comment>
<accession>B3EI07</accession>
<dbReference type="EC" id="5.4.3.8" evidence="1"/>
<dbReference type="EMBL" id="CP001097">
    <property type="protein sequence ID" value="ACD91416.1"/>
    <property type="molecule type" value="Genomic_DNA"/>
</dbReference>
<dbReference type="RefSeq" id="WP_012467281.1">
    <property type="nucleotide sequence ID" value="NC_010803.1"/>
</dbReference>
<dbReference type="SMR" id="B3EI07"/>
<dbReference type="STRING" id="290315.Clim_2394"/>
<dbReference type="KEGG" id="cli:Clim_2394"/>
<dbReference type="eggNOG" id="COG0001">
    <property type="taxonomic scope" value="Bacteria"/>
</dbReference>
<dbReference type="HOGENOM" id="CLU_016922_1_5_10"/>
<dbReference type="OrthoDB" id="9807885at2"/>
<dbReference type="UniPathway" id="UPA00251">
    <property type="reaction ID" value="UER00317"/>
</dbReference>
<dbReference type="UniPathway" id="UPA00668"/>
<dbReference type="Proteomes" id="UP000008841">
    <property type="component" value="Chromosome"/>
</dbReference>
<dbReference type="GO" id="GO:0005737">
    <property type="term" value="C:cytoplasm"/>
    <property type="evidence" value="ECO:0007669"/>
    <property type="project" value="UniProtKB-SubCell"/>
</dbReference>
<dbReference type="GO" id="GO:0042286">
    <property type="term" value="F:glutamate-1-semialdehyde 2,1-aminomutase activity"/>
    <property type="evidence" value="ECO:0007669"/>
    <property type="project" value="UniProtKB-UniRule"/>
</dbReference>
<dbReference type="GO" id="GO:0030170">
    <property type="term" value="F:pyridoxal phosphate binding"/>
    <property type="evidence" value="ECO:0007669"/>
    <property type="project" value="InterPro"/>
</dbReference>
<dbReference type="GO" id="GO:0008483">
    <property type="term" value="F:transaminase activity"/>
    <property type="evidence" value="ECO:0007669"/>
    <property type="project" value="InterPro"/>
</dbReference>
<dbReference type="GO" id="GO:0015995">
    <property type="term" value="P:chlorophyll biosynthetic process"/>
    <property type="evidence" value="ECO:0007669"/>
    <property type="project" value="UniProtKB-UniRule"/>
</dbReference>
<dbReference type="GO" id="GO:0006782">
    <property type="term" value="P:protoporphyrinogen IX biosynthetic process"/>
    <property type="evidence" value="ECO:0007669"/>
    <property type="project" value="UniProtKB-UniRule"/>
</dbReference>
<dbReference type="CDD" id="cd00610">
    <property type="entry name" value="OAT_like"/>
    <property type="match status" value="1"/>
</dbReference>
<dbReference type="FunFam" id="3.40.640.10:FF:000021">
    <property type="entry name" value="Glutamate-1-semialdehyde 2,1-aminomutase"/>
    <property type="match status" value="1"/>
</dbReference>
<dbReference type="Gene3D" id="3.90.1150.10">
    <property type="entry name" value="Aspartate Aminotransferase, domain 1"/>
    <property type="match status" value="1"/>
</dbReference>
<dbReference type="Gene3D" id="3.40.640.10">
    <property type="entry name" value="Type I PLP-dependent aspartate aminotransferase-like (Major domain)"/>
    <property type="match status" value="1"/>
</dbReference>
<dbReference type="HAMAP" id="MF_00375">
    <property type="entry name" value="HemL_aminotrans_3"/>
    <property type="match status" value="1"/>
</dbReference>
<dbReference type="InterPro" id="IPR004639">
    <property type="entry name" value="4pyrrol_synth_GluAld_NH2Trfase"/>
</dbReference>
<dbReference type="InterPro" id="IPR005814">
    <property type="entry name" value="Aminotrans_3"/>
</dbReference>
<dbReference type="InterPro" id="IPR049704">
    <property type="entry name" value="Aminotrans_3_PPA_site"/>
</dbReference>
<dbReference type="InterPro" id="IPR015424">
    <property type="entry name" value="PyrdxlP-dep_Trfase"/>
</dbReference>
<dbReference type="InterPro" id="IPR015421">
    <property type="entry name" value="PyrdxlP-dep_Trfase_major"/>
</dbReference>
<dbReference type="InterPro" id="IPR015422">
    <property type="entry name" value="PyrdxlP-dep_Trfase_small"/>
</dbReference>
<dbReference type="NCBIfam" id="TIGR00713">
    <property type="entry name" value="hemL"/>
    <property type="match status" value="1"/>
</dbReference>
<dbReference type="NCBIfam" id="NF000818">
    <property type="entry name" value="PRK00062.1"/>
    <property type="match status" value="1"/>
</dbReference>
<dbReference type="PANTHER" id="PTHR43713">
    <property type="entry name" value="GLUTAMATE-1-SEMIALDEHYDE 2,1-AMINOMUTASE"/>
    <property type="match status" value="1"/>
</dbReference>
<dbReference type="PANTHER" id="PTHR43713:SF3">
    <property type="entry name" value="GLUTAMATE-1-SEMIALDEHYDE 2,1-AMINOMUTASE 1, CHLOROPLASTIC-RELATED"/>
    <property type="match status" value="1"/>
</dbReference>
<dbReference type="Pfam" id="PF00202">
    <property type="entry name" value="Aminotran_3"/>
    <property type="match status" value="1"/>
</dbReference>
<dbReference type="SUPFAM" id="SSF53383">
    <property type="entry name" value="PLP-dependent transferases"/>
    <property type="match status" value="1"/>
</dbReference>
<dbReference type="PROSITE" id="PS00600">
    <property type="entry name" value="AA_TRANSFER_CLASS_3"/>
    <property type="match status" value="1"/>
</dbReference>
<keyword id="KW-0149">Chlorophyll biosynthesis</keyword>
<keyword id="KW-0963">Cytoplasm</keyword>
<keyword id="KW-0413">Isomerase</keyword>
<keyword id="KW-0627">Porphyrin biosynthesis</keyword>
<keyword id="KW-0663">Pyridoxal phosphate</keyword>
<gene>
    <name evidence="1" type="primary">hemL</name>
    <name type="ordered locus">Clim_2394</name>
</gene>
<organism>
    <name type="scientific">Chlorobium limicola (strain DSM 245 / NBRC 103803 / 6330)</name>
    <dbReference type="NCBI Taxonomy" id="290315"/>
    <lineage>
        <taxon>Bacteria</taxon>
        <taxon>Pseudomonadati</taxon>
        <taxon>Chlorobiota</taxon>
        <taxon>Chlorobiia</taxon>
        <taxon>Chlorobiales</taxon>
        <taxon>Chlorobiaceae</taxon>
        <taxon>Chlorobium/Pelodictyon group</taxon>
        <taxon>Chlorobium</taxon>
    </lineage>
</organism>
<reference key="1">
    <citation type="submission" date="2008-05" db="EMBL/GenBank/DDBJ databases">
        <title>Complete sequence of Chlorobium limicola DSM 245.</title>
        <authorList>
            <consortium name="US DOE Joint Genome Institute"/>
            <person name="Lucas S."/>
            <person name="Copeland A."/>
            <person name="Lapidus A."/>
            <person name="Glavina del Rio T."/>
            <person name="Dalin E."/>
            <person name="Tice H."/>
            <person name="Bruce D."/>
            <person name="Goodwin L."/>
            <person name="Pitluck S."/>
            <person name="Schmutz J."/>
            <person name="Larimer F."/>
            <person name="Land M."/>
            <person name="Hauser L."/>
            <person name="Kyrpides N."/>
            <person name="Ovchinnikova G."/>
            <person name="Zhao F."/>
            <person name="Li T."/>
            <person name="Liu Z."/>
            <person name="Overmann J."/>
            <person name="Bryant D.A."/>
            <person name="Richardson P."/>
        </authorList>
    </citation>
    <scope>NUCLEOTIDE SEQUENCE [LARGE SCALE GENOMIC DNA]</scope>
    <source>
        <strain>DSM 245 / NBRC 103803 / 6330</strain>
    </source>
</reference>
<name>GSA_CHLL2</name>
<protein>
    <recommendedName>
        <fullName evidence="1">Glutamate-1-semialdehyde 2,1-aminomutase</fullName>
        <shortName evidence="1">GSA</shortName>
        <ecNumber evidence="1">5.4.3.8</ecNumber>
    </recommendedName>
    <alternativeName>
        <fullName evidence="1">Glutamate-1-semialdehyde aminotransferase</fullName>
        <shortName evidence="1">GSA-AT</shortName>
    </alternativeName>
</protein>
<feature type="chain" id="PRO_1000121864" description="Glutamate-1-semialdehyde 2,1-aminomutase">
    <location>
        <begin position="1"/>
        <end position="431"/>
    </location>
</feature>
<feature type="modified residue" description="N6-(pyridoxal phosphate)lysine" evidence="1">
    <location>
        <position position="269"/>
    </location>
</feature>